<sequence length="274" mass="29797">MAIHLYKTSTPSTRNGAVGSQVKSNPRNNLIYGQRHCGKGRNARGIITVRHRGGGHKRLYRKIDFRRNEKDISGKIVTIEYDPNRNAYICLIHYGDGEKRYILHPRGAIIGDTIVSGTEVPISMGNALPLTDMPLGTAIHNIEITLGKGGQLARAAGAVAKLIAKEGKSATLKLPSGEVRLISKNCSATVGQVGNVGVNQKSLGRAGSKRWLGKRPVVRGVVMNPVDHPHGGGEGRAPIGRKKPTTPWGYPALGRRSRKRNKYSDSLILRRRSK</sequence>
<feature type="chain" id="PRO_0000310088" description="Large ribosomal subunit protein uL2cz/uL2cy">
    <location>
        <begin position="1"/>
        <end position="274"/>
    </location>
</feature>
<feature type="region of interest" description="Disordered" evidence="3">
    <location>
        <begin position="1"/>
        <end position="23"/>
    </location>
</feature>
<feature type="region of interest" description="Disordered" evidence="3">
    <location>
        <begin position="223"/>
        <end position="274"/>
    </location>
</feature>
<protein>
    <recommendedName>
        <fullName evidence="2">Large ribosomal subunit protein uL2cz/uL2cy</fullName>
    </recommendedName>
    <alternativeName>
        <fullName evidence="4">50S ribosomal protein L2, chloroplastic</fullName>
    </alternativeName>
</protein>
<geneLocation type="chloroplast"/>
<dbReference type="EMBL" id="DQ359689">
    <property type="protein sequence ID" value="ABC70796.1"/>
    <property type="molecule type" value="Genomic_DNA"/>
</dbReference>
<dbReference type="EMBL" id="DQ359689">
    <property type="protein sequence ID" value="ABC70817.1"/>
    <property type="molecule type" value="Genomic_DNA"/>
</dbReference>
<dbReference type="SMR" id="A1XGS8"/>
<dbReference type="GO" id="GO:0009507">
    <property type="term" value="C:chloroplast"/>
    <property type="evidence" value="ECO:0007669"/>
    <property type="project" value="UniProtKB-SubCell"/>
</dbReference>
<dbReference type="GO" id="GO:0005762">
    <property type="term" value="C:mitochondrial large ribosomal subunit"/>
    <property type="evidence" value="ECO:0007669"/>
    <property type="project" value="TreeGrafter"/>
</dbReference>
<dbReference type="GO" id="GO:0019843">
    <property type="term" value="F:rRNA binding"/>
    <property type="evidence" value="ECO:0007669"/>
    <property type="project" value="UniProtKB-UniRule"/>
</dbReference>
<dbReference type="GO" id="GO:0003735">
    <property type="term" value="F:structural constituent of ribosome"/>
    <property type="evidence" value="ECO:0007669"/>
    <property type="project" value="InterPro"/>
</dbReference>
<dbReference type="GO" id="GO:0016740">
    <property type="term" value="F:transferase activity"/>
    <property type="evidence" value="ECO:0007669"/>
    <property type="project" value="InterPro"/>
</dbReference>
<dbReference type="GO" id="GO:0032543">
    <property type="term" value="P:mitochondrial translation"/>
    <property type="evidence" value="ECO:0007669"/>
    <property type="project" value="TreeGrafter"/>
</dbReference>
<dbReference type="FunFam" id="4.10.950.10:FF:000001">
    <property type="entry name" value="50S ribosomal protein L2"/>
    <property type="match status" value="1"/>
</dbReference>
<dbReference type="FunFam" id="2.30.30.30:FF:000008">
    <property type="entry name" value="50S ribosomal protein L2, chloroplastic"/>
    <property type="match status" value="1"/>
</dbReference>
<dbReference type="FunFam" id="2.40.50.140:FF:000029">
    <property type="entry name" value="50S ribosomal protein L2, chloroplastic"/>
    <property type="match status" value="1"/>
</dbReference>
<dbReference type="Gene3D" id="2.30.30.30">
    <property type="match status" value="1"/>
</dbReference>
<dbReference type="Gene3D" id="2.40.50.140">
    <property type="entry name" value="Nucleic acid-binding proteins"/>
    <property type="match status" value="1"/>
</dbReference>
<dbReference type="Gene3D" id="4.10.950.10">
    <property type="entry name" value="Ribosomal protein L2, domain 3"/>
    <property type="match status" value="1"/>
</dbReference>
<dbReference type="HAMAP" id="MF_01320_B">
    <property type="entry name" value="Ribosomal_uL2_B"/>
    <property type="match status" value="1"/>
</dbReference>
<dbReference type="InterPro" id="IPR012340">
    <property type="entry name" value="NA-bd_OB-fold"/>
</dbReference>
<dbReference type="InterPro" id="IPR014722">
    <property type="entry name" value="Rib_uL2_dom2"/>
</dbReference>
<dbReference type="InterPro" id="IPR002171">
    <property type="entry name" value="Ribosomal_uL2"/>
</dbReference>
<dbReference type="InterPro" id="IPR005880">
    <property type="entry name" value="Ribosomal_uL2_bac/org-type"/>
</dbReference>
<dbReference type="InterPro" id="IPR022669">
    <property type="entry name" value="Ribosomal_uL2_C"/>
</dbReference>
<dbReference type="InterPro" id="IPR022671">
    <property type="entry name" value="Ribosomal_uL2_CS"/>
</dbReference>
<dbReference type="InterPro" id="IPR014726">
    <property type="entry name" value="Ribosomal_uL2_dom3"/>
</dbReference>
<dbReference type="InterPro" id="IPR022666">
    <property type="entry name" value="Ribosomal_uL2_RNA-bd_dom"/>
</dbReference>
<dbReference type="InterPro" id="IPR008991">
    <property type="entry name" value="Translation_prot_SH3-like_sf"/>
</dbReference>
<dbReference type="NCBIfam" id="TIGR01171">
    <property type="entry name" value="rplB_bact"/>
    <property type="match status" value="1"/>
</dbReference>
<dbReference type="PANTHER" id="PTHR13691:SF5">
    <property type="entry name" value="LARGE RIBOSOMAL SUBUNIT PROTEIN UL2M"/>
    <property type="match status" value="1"/>
</dbReference>
<dbReference type="PANTHER" id="PTHR13691">
    <property type="entry name" value="RIBOSOMAL PROTEIN L2"/>
    <property type="match status" value="1"/>
</dbReference>
<dbReference type="Pfam" id="PF00181">
    <property type="entry name" value="Ribosomal_L2"/>
    <property type="match status" value="1"/>
</dbReference>
<dbReference type="Pfam" id="PF03947">
    <property type="entry name" value="Ribosomal_L2_C"/>
    <property type="match status" value="1"/>
</dbReference>
<dbReference type="PIRSF" id="PIRSF002158">
    <property type="entry name" value="Ribosomal_L2"/>
    <property type="match status" value="1"/>
</dbReference>
<dbReference type="SMART" id="SM01383">
    <property type="entry name" value="Ribosomal_L2"/>
    <property type="match status" value="1"/>
</dbReference>
<dbReference type="SMART" id="SM01382">
    <property type="entry name" value="Ribosomal_L2_C"/>
    <property type="match status" value="1"/>
</dbReference>
<dbReference type="SUPFAM" id="SSF50249">
    <property type="entry name" value="Nucleic acid-binding proteins"/>
    <property type="match status" value="1"/>
</dbReference>
<dbReference type="SUPFAM" id="SSF50104">
    <property type="entry name" value="Translation proteins SH3-like domain"/>
    <property type="match status" value="1"/>
</dbReference>
<dbReference type="PROSITE" id="PS00467">
    <property type="entry name" value="RIBOSOMAL_L2"/>
    <property type="match status" value="1"/>
</dbReference>
<accession>A1XGS8</accession>
<proteinExistence type="inferred from homology"/>
<organism>
    <name type="scientific">Ranunculus macranthus</name>
    <name type="common">Large buttercup</name>
    <dbReference type="NCBI Taxonomy" id="334596"/>
    <lineage>
        <taxon>Eukaryota</taxon>
        <taxon>Viridiplantae</taxon>
        <taxon>Streptophyta</taxon>
        <taxon>Embryophyta</taxon>
        <taxon>Tracheophyta</taxon>
        <taxon>Spermatophyta</taxon>
        <taxon>Magnoliopsida</taxon>
        <taxon>Ranunculales</taxon>
        <taxon>Ranunculaceae</taxon>
        <taxon>Ranunculoideae</taxon>
        <taxon>Ranunculeae</taxon>
        <taxon>Ranunculus</taxon>
    </lineage>
</organism>
<comment type="subunit">
    <text evidence="1">Part of the 50S ribosomal subunit.</text>
</comment>
<comment type="subcellular location">
    <subcellularLocation>
        <location>Plastid</location>
        <location>Chloroplast</location>
    </subcellularLocation>
</comment>
<comment type="similarity">
    <text evidence="4">Belongs to the universal ribosomal protein uL2 family.</text>
</comment>
<keyword id="KW-0150">Chloroplast</keyword>
<keyword id="KW-0934">Plastid</keyword>
<keyword id="KW-0687">Ribonucleoprotein</keyword>
<keyword id="KW-0689">Ribosomal protein</keyword>
<evidence type="ECO:0000250" key="1"/>
<evidence type="ECO:0000255" key="2">
    <source>
        <dbReference type="HAMAP-Rule" id="MF_01320"/>
    </source>
</evidence>
<evidence type="ECO:0000256" key="3">
    <source>
        <dbReference type="SAM" id="MobiDB-lite"/>
    </source>
</evidence>
<evidence type="ECO:0000305" key="4"/>
<gene>
    <name type="primary">rpl2-A</name>
</gene>
<gene>
    <name type="primary">rpl2-B</name>
</gene>
<reference key="1">
    <citation type="journal article" date="2007" name="BMC Genomics">
        <title>Comparative chloroplast genomics: analyses including new sequences from the angiosperms Nuphar advena and Ranunculus macranthus.</title>
        <authorList>
            <person name="Raubeson L.A."/>
            <person name="Peery R."/>
            <person name="Chumley T.W."/>
            <person name="Dziubek C."/>
            <person name="Fourcade H.M."/>
            <person name="Boore J.L."/>
            <person name="Jansen R.K."/>
        </authorList>
    </citation>
    <scope>NUCLEOTIDE SEQUENCE [LARGE SCALE GENOMIC DNA]</scope>
</reference>
<name>RK2_RANMC</name>